<dbReference type="EMBL" id="CP001281">
    <property type="protein sequence ID" value="ACK54932.1"/>
    <property type="status" value="ALT_INIT"/>
    <property type="molecule type" value="Genomic_DNA"/>
</dbReference>
<dbReference type="RefSeq" id="WP_187283001.1">
    <property type="nucleotide sequence ID" value="NC_011662.2"/>
</dbReference>
<dbReference type="STRING" id="85643.Tmz1t_2192"/>
<dbReference type="KEGG" id="tmz:Tmz1t_2192"/>
<dbReference type="eggNOG" id="COG1196">
    <property type="taxonomic scope" value="Bacteria"/>
</dbReference>
<dbReference type="HOGENOM" id="CLU_001042_2_2_4"/>
<dbReference type="Proteomes" id="UP000002186">
    <property type="component" value="Chromosome"/>
</dbReference>
<dbReference type="GO" id="GO:0005737">
    <property type="term" value="C:cytoplasm"/>
    <property type="evidence" value="ECO:0007669"/>
    <property type="project" value="UniProtKB-SubCell"/>
</dbReference>
<dbReference type="GO" id="GO:0005524">
    <property type="term" value="F:ATP binding"/>
    <property type="evidence" value="ECO:0007669"/>
    <property type="project" value="UniProtKB-UniRule"/>
</dbReference>
<dbReference type="GO" id="GO:0016887">
    <property type="term" value="F:ATP hydrolysis activity"/>
    <property type="evidence" value="ECO:0007669"/>
    <property type="project" value="InterPro"/>
</dbReference>
<dbReference type="GO" id="GO:0003677">
    <property type="term" value="F:DNA binding"/>
    <property type="evidence" value="ECO:0007669"/>
    <property type="project" value="UniProtKB-UniRule"/>
</dbReference>
<dbReference type="GO" id="GO:0030261">
    <property type="term" value="P:chromosome condensation"/>
    <property type="evidence" value="ECO:0007669"/>
    <property type="project" value="InterPro"/>
</dbReference>
<dbReference type="GO" id="GO:0007059">
    <property type="term" value="P:chromosome segregation"/>
    <property type="evidence" value="ECO:0007669"/>
    <property type="project" value="UniProtKB-UniRule"/>
</dbReference>
<dbReference type="GO" id="GO:0006260">
    <property type="term" value="P:DNA replication"/>
    <property type="evidence" value="ECO:0007669"/>
    <property type="project" value="UniProtKB-UniRule"/>
</dbReference>
<dbReference type="GO" id="GO:0007062">
    <property type="term" value="P:sister chromatid cohesion"/>
    <property type="evidence" value="ECO:0007669"/>
    <property type="project" value="InterPro"/>
</dbReference>
<dbReference type="CDD" id="cd03278">
    <property type="entry name" value="ABC_SMC_barmotin"/>
    <property type="match status" value="1"/>
</dbReference>
<dbReference type="Gene3D" id="3.40.50.300">
    <property type="entry name" value="P-loop containing nucleotide triphosphate hydrolases"/>
    <property type="match status" value="2"/>
</dbReference>
<dbReference type="HAMAP" id="MF_01894">
    <property type="entry name" value="Smc_prok"/>
    <property type="match status" value="1"/>
</dbReference>
<dbReference type="InterPro" id="IPR027417">
    <property type="entry name" value="P-loop_NTPase"/>
</dbReference>
<dbReference type="InterPro" id="IPR003395">
    <property type="entry name" value="RecF/RecN/SMC_N"/>
</dbReference>
<dbReference type="InterPro" id="IPR024704">
    <property type="entry name" value="SMC"/>
</dbReference>
<dbReference type="InterPro" id="IPR011890">
    <property type="entry name" value="SMC_prok"/>
</dbReference>
<dbReference type="PANTHER" id="PTHR43977">
    <property type="entry name" value="STRUCTURAL MAINTENANCE OF CHROMOSOMES PROTEIN 3"/>
    <property type="match status" value="1"/>
</dbReference>
<dbReference type="Pfam" id="PF02463">
    <property type="entry name" value="SMC_N"/>
    <property type="match status" value="1"/>
</dbReference>
<dbReference type="PIRSF" id="PIRSF005719">
    <property type="entry name" value="SMC"/>
    <property type="match status" value="1"/>
</dbReference>
<dbReference type="SUPFAM" id="SSF52540">
    <property type="entry name" value="P-loop containing nucleoside triphosphate hydrolases"/>
    <property type="match status" value="1"/>
</dbReference>
<name>SMC_THASP</name>
<feature type="chain" id="PRO_0000409283" description="Chromosome partition protein Smc">
    <location>
        <begin position="1"/>
        <end position="1208"/>
    </location>
</feature>
<feature type="coiled-coil region" evidence="1">
    <location>
        <begin position="170"/>
        <end position="205"/>
    </location>
</feature>
<feature type="coiled-coil region" evidence="1">
    <location>
        <begin position="239"/>
        <end position="504"/>
    </location>
</feature>
<feature type="coiled-coil region" evidence="1">
    <location>
        <begin position="694"/>
        <end position="1054"/>
    </location>
</feature>
<feature type="binding site" evidence="1">
    <location>
        <begin position="32"/>
        <end position="39"/>
    </location>
    <ligand>
        <name>ATP</name>
        <dbReference type="ChEBI" id="CHEBI:30616"/>
    </ligand>
</feature>
<reference key="1">
    <citation type="submission" date="2009-05" db="EMBL/GenBank/DDBJ databases">
        <title>Complete sequence of chromosome of Thauera sp. MZ1T.</title>
        <authorList>
            <consortium name="US DOE Joint Genome Institute"/>
            <person name="Lucas S."/>
            <person name="Copeland A."/>
            <person name="Lapidus A."/>
            <person name="Glavina del Rio T."/>
            <person name="Dalin E."/>
            <person name="Tice H."/>
            <person name="Bruce D."/>
            <person name="Goodwin L."/>
            <person name="Pitluck S."/>
            <person name="Sims D."/>
            <person name="Brettin T."/>
            <person name="Detter J.C."/>
            <person name="Han C."/>
            <person name="Larimer F."/>
            <person name="Land M."/>
            <person name="Hauser L."/>
            <person name="Kyrpides N."/>
            <person name="Mikhailova N."/>
            <person name="Sayler G.S."/>
        </authorList>
    </citation>
    <scope>NUCLEOTIDE SEQUENCE [LARGE SCALE GENOMIC DNA]</scope>
    <source>
        <strain>MZ1T</strain>
    </source>
</reference>
<sequence>MRLSKLKLAGFKTFVDPTTVLTPGNLVGVVGPNGCGKSNIIDAVRWVLGETRASALRGESMQDVIFNGSTTRKPVSRASVELVFDNAEGRAAGQWSRYAEISVKRVLDRSGESTYYINNVHVRRKDVIDLFLGTGLGPRAYAIIEQGMISRIIEARPEEIRGFLEEAAGVTKYRERRKETEGRLRDARDNLARLDDIRMELGERIVHLEAQAAVAARYRELDAAHVEKQQLLWLVKRNEARAEQARVAASLNEASSRIEADSARLQELETSVESRRDAHFEASEAVHVAQNDLFAASAEVARLETELQHLGEARRRLEARLAQLELDRGHWSSRRETLAADRARWQELAENAALRAEHAEARHLEIADRLPELDSSRQGADATMAAARRELAQTEQQLRVEETKRASALRALEALQQRRGRLEGERGGIVGPDERVLAEREARLEALQDELEVHQQELAAAQPRLPDAQAALKAALEHERAVQRRLTELRARRDALMQLQARVQSQGKLGDWLERHGLDQLPPLWKQLQVAAGWDEAVQAVLRERLAALTSPDPALALAAARTVLDETPPESLAIALPARSGAPAERANCAQGPLSPQGRVTVATTATESSTAIATDVAPAVLALAGLVEVRDPALRALVDDFLAGAWAVERLEDWLPLRAQLAPSTCLVGPRGQVLTRDALVHHAPDARTHGVIERQREIEGLSAELQAHEDEAHLAHDALVVAESAASALQERINGLRRELQTIQAQVHAEQVEVLKLAQARARAQERREQLARDLEDIVHLESAEREHLTRAELEQARAAELAELQRERLDAATEVLREREHAVREARALEQSAARELQEARFSERECAGKLEDIARNQQLAGEQLERVVAELAARAAELDATDDHRSAEALQEALALRGRREAALAARRDALAEAAAALKQVEELRLRTEHEAAPIRARVAELRLALQAAELAVAQFEERLVEARADEAALAPLLAAEPKESTLQREVARLAREIAELGAVNMAALDELTTASERKGYLDAQTEDLLQAIDTLEDAIRRIDRETREQLQDTYNTVNRQFGALFPQLFGGGRAELVLTGEEILDAGIQIVAQPPGKKNASIHLLSGGEKALTAIALVFSMFQLNPAPFCMLDEVDAPLDDTNTERYANMVKRMSAQTQFIFISHSKITMEFAQQLVGVTMQEQGVSRVVEVDIEEALRLADPAAA</sequence>
<proteinExistence type="inferred from homology"/>
<organism>
    <name type="scientific">Thauera aminoaromatica</name>
    <dbReference type="NCBI Taxonomy" id="164330"/>
    <lineage>
        <taxon>Bacteria</taxon>
        <taxon>Pseudomonadati</taxon>
        <taxon>Pseudomonadota</taxon>
        <taxon>Betaproteobacteria</taxon>
        <taxon>Rhodocyclales</taxon>
        <taxon>Zoogloeaceae</taxon>
        <taxon>Thauera</taxon>
    </lineage>
</organism>
<comment type="function">
    <text evidence="1">Required for chromosome condensation and partitioning.</text>
</comment>
<comment type="subunit">
    <text evidence="1">Homodimer.</text>
</comment>
<comment type="subcellular location">
    <subcellularLocation>
        <location evidence="1">Cytoplasm</location>
    </subcellularLocation>
</comment>
<comment type="domain">
    <text evidence="1">Contains large globular domains required for ATP hydrolysis at each terminus and a third globular domain forming a flexible hinge near the middle of the molecule. These domains are separated by coiled-coil structures.</text>
</comment>
<comment type="similarity">
    <text evidence="1">Belongs to the SMC family.</text>
</comment>
<comment type="sequence caution" evidence="2">
    <conflict type="erroneous initiation">
        <sequence resource="EMBL-CDS" id="ACK54932"/>
    </conflict>
    <text>Extended N-terminus.</text>
</comment>
<protein>
    <recommendedName>
        <fullName evidence="1">Chromosome partition protein Smc</fullName>
    </recommendedName>
</protein>
<evidence type="ECO:0000255" key="1">
    <source>
        <dbReference type="HAMAP-Rule" id="MF_01894"/>
    </source>
</evidence>
<evidence type="ECO:0000305" key="2"/>
<gene>
    <name evidence="1" type="primary">smc</name>
    <name type="ordered locus">Tmz1t_2192</name>
</gene>
<keyword id="KW-0067">ATP-binding</keyword>
<keyword id="KW-0175">Coiled coil</keyword>
<keyword id="KW-0963">Cytoplasm</keyword>
<keyword id="KW-0238">DNA-binding</keyword>
<keyword id="KW-0547">Nucleotide-binding</keyword>
<keyword id="KW-1185">Reference proteome</keyword>
<accession>C4ZJU1</accession>